<name>PURA_PLAVS</name>
<feature type="chain" id="PRO_0000399296" description="Adenylosuccinate synthetase">
    <location>
        <begin position="1"/>
        <end position="437"/>
    </location>
</feature>
<feature type="active site" description="Proton acceptor" evidence="2">
    <location>
        <position position="26"/>
    </location>
</feature>
<feature type="active site" description="Proton donor" evidence="2">
    <location>
        <position position="54"/>
    </location>
</feature>
<feature type="binding site" evidence="2">
    <location>
        <begin position="25"/>
        <end position="31"/>
    </location>
    <ligand>
        <name>GTP</name>
        <dbReference type="ChEBI" id="CHEBI:37565"/>
    </ligand>
</feature>
<feature type="binding site" description="in other chain" evidence="2">
    <location>
        <begin position="26"/>
        <end position="29"/>
    </location>
    <ligand>
        <name>IMP</name>
        <dbReference type="ChEBI" id="CHEBI:58053"/>
        <note>ligand shared between dimeric partners</note>
    </ligand>
</feature>
<feature type="binding site" evidence="2">
    <location>
        <position position="26"/>
    </location>
    <ligand>
        <name>Mg(2+)</name>
        <dbReference type="ChEBI" id="CHEBI:18420"/>
    </ligand>
</feature>
<feature type="binding site" description="in other chain" evidence="2">
    <location>
        <begin position="51"/>
        <end position="54"/>
    </location>
    <ligand>
        <name>IMP</name>
        <dbReference type="ChEBI" id="CHEBI:58053"/>
        <note>ligand shared between dimeric partners</note>
    </ligand>
</feature>
<feature type="binding site" evidence="2">
    <location>
        <begin position="53"/>
        <end position="55"/>
    </location>
    <ligand>
        <name>GTP</name>
        <dbReference type="ChEBI" id="CHEBI:37565"/>
    </ligand>
</feature>
<feature type="binding site" evidence="2">
    <location>
        <position position="53"/>
    </location>
    <ligand>
        <name>Mg(2+)</name>
        <dbReference type="ChEBI" id="CHEBI:18420"/>
    </ligand>
</feature>
<feature type="binding site" evidence="2">
    <location>
        <position position="62"/>
    </location>
    <ligand>
        <name>GTP</name>
        <dbReference type="ChEBI" id="CHEBI:37565"/>
    </ligand>
</feature>
<feature type="binding site" description="in other chain" evidence="2">
    <location>
        <position position="141"/>
    </location>
    <ligand>
        <name>IMP</name>
        <dbReference type="ChEBI" id="CHEBI:58053"/>
        <note>ligand shared between dimeric partners</note>
    </ligand>
</feature>
<feature type="binding site" evidence="2">
    <location>
        <position position="155"/>
    </location>
    <ligand>
        <name>IMP</name>
        <dbReference type="ChEBI" id="CHEBI:58053"/>
        <note>ligand shared between dimeric partners</note>
    </ligand>
</feature>
<feature type="binding site" description="in other chain" evidence="2">
    <location>
        <position position="232"/>
    </location>
    <ligand>
        <name>IMP</name>
        <dbReference type="ChEBI" id="CHEBI:58053"/>
        <note>ligand shared between dimeric partners</note>
    </ligand>
</feature>
<feature type="binding site" description="in other chain" evidence="2">
    <location>
        <position position="247"/>
    </location>
    <ligand>
        <name>IMP</name>
        <dbReference type="ChEBI" id="CHEBI:58053"/>
        <note>ligand shared between dimeric partners</note>
    </ligand>
</feature>
<feature type="binding site" evidence="2">
    <location>
        <begin position="307"/>
        <end position="313"/>
    </location>
    <ligand>
        <name>substrate</name>
    </ligand>
</feature>
<feature type="binding site" evidence="2">
    <location>
        <position position="307"/>
    </location>
    <ligand>
        <name>GTP</name>
        <dbReference type="ChEBI" id="CHEBI:37565"/>
    </ligand>
</feature>
<feature type="binding site" description="in other chain" evidence="2">
    <location>
        <position position="311"/>
    </location>
    <ligand>
        <name>IMP</name>
        <dbReference type="ChEBI" id="CHEBI:58053"/>
        <note>ligand shared between dimeric partners</note>
    </ligand>
</feature>
<feature type="binding site" evidence="2">
    <location>
        <position position="313"/>
    </location>
    <ligand>
        <name>GTP</name>
        <dbReference type="ChEBI" id="CHEBI:37565"/>
    </ligand>
</feature>
<feature type="binding site" evidence="2">
    <location>
        <begin position="339"/>
        <end position="341"/>
    </location>
    <ligand>
        <name>GTP</name>
        <dbReference type="ChEBI" id="CHEBI:37565"/>
    </ligand>
</feature>
<feature type="binding site" evidence="2">
    <location>
        <begin position="425"/>
        <end position="427"/>
    </location>
    <ligand>
        <name>GTP</name>
        <dbReference type="ChEBI" id="CHEBI:37565"/>
    </ligand>
</feature>
<reference key="1">
    <citation type="journal article" date="2008" name="Nature">
        <title>Comparative genomics of the neglected human malaria parasite Plasmodium vivax.</title>
        <authorList>
            <person name="Carlton J.M."/>
            <person name="Adams J.H."/>
            <person name="Silva J.C."/>
            <person name="Bidwell S.L."/>
            <person name="Lorenzi H."/>
            <person name="Caler E."/>
            <person name="Crabtree J."/>
            <person name="Angiuoli S.V."/>
            <person name="Merino E.F."/>
            <person name="Amedeo P."/>
            <person name="Cheng Q."/>
            <person name="Coulson R.M.R."/>
            <person name="Crabb B.S."/>
            <person name="del Portillo H.A."/>
            <person name="Essien K."/>
            <person name="Feldblyum T.V."/>
            <person name="Fernandez-Becerra C."/>
            <person name="Gilson P.R."/>
            <person name="Gueye A.H."/>
            <person name="Guo X."/>
            <person name="Kang'a S."/>
            <person name="Kooij T.W.A."/>
            <person name="Korsinczky M."/>
            <person name="Meyer E.V.-S."/>
            <person name="Nene V."/>
            <person name="Paulsen I."/>
            <person name="White O."/>
            <person name="Ralph S.A."/>
            <person name="Ren Q."/>
            <person name="Sargeant T.J."/>
            <person name="Salzberg S.L."/>
            <person name="Stoeckert C.J."/>
            <person name="Sullivan S.A."/>
            <person name="Yamamoto M.M."/>
            <person name="Hoffman S.L."/>
            <person name="Wortman J.R."/>
            <person name="Gardner M.J."/>
            <person name="Galinski M.R."/>
            <person name="Barnwell J.W."/>
            <person name="Fraser-Liggett C.M."/>
        </authorList>
    </citation>
    <scope>NUCLEOTIDE SEQUENCE [LARGE SCALE GENOMIC DNA]</scope>
    <source>
        <strain>Salvador I</strain>
    </source>
</reference>
<organism>
    <name type="scientific">Plasmodium vivax (strain Salvador I)</name>
    <dbReference type="NCBI Taxonomy" id="126793"/>
    <lineage>
        <taxon>Eukaryota</taxon>
        <taxon>Sar</taxon>
        <taxon>Alveolata</taxon>
        <taxon>Apicomplexa</taxon>
        <taxon>Aconoidasida</taxon>
        <taxon>Haemosporida</taxon>
        <taxon>Plasmodiidae</taxon>
        <taxon>Plasmodium</taxon>
        <taxon>Plasmodium (Plasmodium)</taxon>
    </lineage>
</organism>
<gene>
    <name type="ORF">PVX_114710</name>
</gene>
<comment type="function">
    <text evidence="1">Plays an important role in the salvage pathway for purine nucleotide biosynthesis. Catalyzes the first committed step in the biosynthesis of AMP from IMP (By similarity).</text>
</comment>
<comment type="catalytic activity">
    <reaction evidence="2">
        <text>IMP + L-aspartate + GTP = N(6)-(1,2-dicarboxyethyl)-AMP + GDP + phosphate + 2 H(+)</text>
        <dbReference type="Rhea" id="RHEA:15753"/>
        <dbReference type="ChEBI" id="CHEBI:15378"/>
        <dbReference type="ChEBI" id="CHEBI:29991"/>
        <dbReference type="ChEBI" id="CHEBI:37565"/>
        <dbReference type="ChEBI" id="CHEBI:43474"/>
        <dbReference type="ChEBI" id="CHEBI:57567"/>
        <dbReference type="ChEBI" id="CHEBI:58053"/>
        <dbReference type="ChEBI" id="CHEBI:58189"/>
        <dbReference type="EC" id="6.3.4.4"/>
    </reaction>
</comment>
<comment type="cofactor">
    <cofactor evidence="2">
        <name>Mg(2+)</name>
        <dbReference type="ChEBI" id="CHEBI:18420"/>
    </cofactor>
    <text evidence="2">Binds 1 Mg(2+) ion per subunit.</text>
</comment>
<comment type="pathway">
    <text evidence="2">Purine metabolism; AMP biosynthesis via de novo pathway; AMP from IMP: step 1/2.</text>
</comment>
<comment type="subunit">
    <text evidence="2">Homodimer.</text>
</comment>
<comment type="subcellular location">
    <subcellularLocation>
        <location evidence="2">Cytoplasm</location>
    </subcellularLocation>
</comment>
<comment type="miscellaneous">
    <text>Parasitic protozoa lack the de novo purine biosynthesis pathway and rely exclusively on the salvage pathway for their purine nucleotide requirements.</text>
</comment>
<comment type="similarity">
    <text evidence="2">Belongs to the adenylosuccinate synthetase family.</text>
</comment>
<keyword id="KW-0963">Cytoplasm</keyword>
<keyword id="KW-0342">GTP-binding</keyword>
<keyword id="KW-0436">Ligase</keyword>
<keyword id="KW-0460">Magnesium</keyword>
<keyword id="KW-0479">Metal-binding</keyword>
<keyword id="KW-0547">Nucleotide-binding</keyword>
<keyword id="KW-0658">Purine biosynthesis</keyword>
<keyword id="KW-1185">Reference proteome</keyword>
<accession>A5K2F3</accession>
<evidence type="ECO:0000250" key="1"/>
<evidence type="ECO:0000255" key="2">
    <source>
        <dbReference type="HAMAP-Rule" id="MF_03125"/>
    </source>
</evidence>
<dbReference type="EC" id="6.3.4.4" evidence="2"/>
<dbReference type="EMBL" id="AAKM01000003">
    <property type="protein sequence ID" value="EDL46603.1"/>
    <property type="molecule type" value="Genomic_DNA"/>
</dbReference>
<dbReference type="RefSeq" id="XP_001616330.1">
    <property type="nucleotide sequence ID" value="XM_001616280.1"/>
</dbReference>
<dbReference type="SMR" id="A5K2F3"/>
<dbReference type="FunCoup" id="A5K2F3">
    <property type="interactions" value="344"/>
</dbReference>
<dbReference type="STRING" id="126793.A5K2F3"/>
<dbReference type="EnsemblProtists" id="EDL46603">
    <property type="protein sequence ID" value="EDL46603"/>
    <property type="gene ID" value="PVX_114710"/>
</dbReference>
<dbReference type="GeneID" id="5475629"/>
<dbReference type="KEGG" id="pvx:PVX_114710"/>
<dbReference type="VEuPathDB" id="PlasmoDB:PVX_114710"/>
<dbReference type="InParanoid" id="A5K2F3"/>
<dbReference type="OMA" id="FHHAKPI"/>
<dbReference type="PhylomeDB" id="A5K2F3"/>
<dbReference type="UniPathway" id="UPA00075">
    <property type="reaction ID" value="UER00335"/>
</dbReference>
<dbReference type="Proteomes" id="UP000008333">
    <property type="component" value="Chromosome 11"/>
</dbReference>
<dbReference type="GO" id="GO:0005737">
    <property type="term" value="C:cytoplasm"/>
    <property type="evidence" value="ECO:0007669"/>
    <property type="project" value="UniProtKB-SubCell"/>
</dbReference>
<dbReference type="GO" id="GO:0004019">
    <property type="term" value="F:adenylosuccinate synthase activity"/>
    <property type="evidence" value="ECO:0007669"/>
    <property type="project" value="UniProtKB-UniRule"/>
</dbReference>
<dbReference type="GO" id="GO:0005525">
    <property type="term" value="F:GTP binding"/>
    <property type="evidence" value="ECO:0007669"/>
    <property type="project" value="UniProtKB-UniRule"/>
</dbReference>
<dbReference type="GO" id="GO:0000287">
    <property type="term" value="F:magnesium ion binding"/>
    <property type="evidence" value="ECO:0007669"/>
    <property type="project" value="UniProtKB-UniRule"/>
</dbReference>
<dbReference type="GO" id="GO:0044208">
    <property type="term" value="P:'de novo' AMP biosynthetic process"/>
    <property type="evidence" value="ECO:0007669"/>
    <property type="project" value="UniProtKB-UniRule"/>
</dbReference>
<dbReference type="GO" id="GO:0046040">
    <property type="term" value="P:IMP metabolic process"/>
    <property type="evidence" value="ECO:0007669"/>
    <property type="project" value="TreeGrafter"/>
</dbReference>
<dbReference type="CDD" id="cd03108">
    <property type="entry name" value="AdSS"/>
    <property type="match status" value="1"/>
</dbReference>
<dbReference type="FunFam" id="3.90.170.10:FF:000001">
    <property type="entry name" value="Adenylosuccinate synthetase"/>
    <property type="match status" value="1"/>
</dbReference>
<dbReference type="Gene3D" id="3.40.440.10">
    <property type="entry name" value="Adenylosuccinate Synthetase, subunit A, domain 1"/>
    <property type="match status" value="1"/>
</dbReference>
<dbReference type="Gene3D" id="1.10.300.10">
    <property type="entry name" value="Adenylosuccinate Synthetase, subunit A, domain 2"/>
    <property type="match status" value="1"/>
</dbReference>
<dbReference type="Gene3D" id="3.90.170.10">
    <property type="entry name" value="Adenylosuccinate Synthetase, subunit A, domain 3"/>
    <property type="match status" value="1"/>
</dbReference>
<dbReference type="HAMAP" id="MF_00011">
    <property type="entry name" value="Adenylosucc_synth"/>
    <property type="match status" value="1"/>
</dbReference>
<dbReference type="InterPro" id="IPR018220">
    <property type="entry name" value="Adenylosuccin_syn_GTP-bd"/>
</dbReference>
<dbReference type="InterPro" id="IPR033128">
    <property type="entry name" value="Adenylosuccin_syn_Lys_AS"/>
</dbReference>
<dbReference type="InterPro" id="IPR042109">
    <property type="entry name" value="Adenylosuccinate_synth_dom1"/>
</dbReference>
<dbReference type="InterPro" id="IPR042110">
    <property type="entry name" value="Adenylosuccinate_synth_dom2"/>
</dbReference>
<dbReference type="InterPro" id="IPR042111">
    <property type="entry name" value="Adenylosuccinate_synth_dom3"/>
</dbReference>
<dbReference type="InterPro" id="IPR001114">
    <property type="entry name" value="Adenylosuccinate_synthetase"/>
</dbReference>
<dbReference type="InterPro" id="IPR027417">
    <property type="entry name" value="P-loop_NTPase"/>
</dbReference>
<dbReference type="NCBIfam" id="NF002223">
    <property type="entry name" value="PRK01117.1"/>
    <property type="match status" value="1"/>
</dbReference>
<dbReference type="NCBIfam" id="TIGR00184">
    <property type="entry name" value="purA"/>
    <property type="match status" value="1"/>
</dbReference>
<dbReference type="PANTHER" id="PTHR11846">
    <property type="entry name" value="ADENYLOSUCCINATE SYNTHETASE"/>
    <property type="match status" value="1"/>
</dbReference>
<dbReference type="PANTHER" id="PTHR11846:SF0">
    <property type="entry name" value="ADENYLOSUCCINATE SYNTHETASE"/>
    <property type="match status" value="1"/>
</dbReference>
<dbReference type="Pfam" id="PF00709">
    <property type="entry name" value="Adenylsucc_synt"/>
    <property type="match status" value="1"/>
</dbReference>
<dbReference type="SMART" id="SM00788">
    <property type="entry name" value="Adenylsucc_synt"/>
    <property type="match status" value="1"/>
</dbReference>
<dbReference type="SUPFAM" id="SSF52540">
    <property type="entry name" value="P-loop containing nucleoside triphosphate hydrolases"/>
    <property type="match status" value="1"/>
</dbReference>
<dbReference type="PROSITE" id="PS01266">
    <property type="entry name" value="ADENYLOSUCCIN_SYN_1"/>
    <property type="match status" value="1"/>
</dbReference>
<dbReference type="PROSITE" id="PS00513">
    <property type="entry name" value="ADENYLOSUCCIN_SYN_2"/>
    <property type="match status" value="1"/>
</dbReference>
<proteinExistence type="inferred from homology"/>
<sequence>MNIFQHDIQDVGQGNVVAILGSQWGDEGKGKIIDILSKHSDITCRFNGGSNAGHTISVNDKKYALHLLPCGILYENNICVLGNGMVVHVKSLIDEINSIGGNIIDRLYLSDKSHILFDIHQTIDSMQENKKLKEGKQIGTTKRGIGPCYSTKVSRVGIRLGSLKNFEHFKSLYVKLIDNLMELYNISDYNKEEELEAFYQYHLLLKDRIIDVISFMNNQLNEKKKILIEGANAAMLDIDFGTYPYVTSSCTTVGGIFSGLGINHKKLNLTVGVVKSYLTRVGCGPFMTELTNEIGDYLREKGYEYGTTTKRPRRCGWLDIPMLLYVKCINSIDIINLTKLDVLSGLKEISLCVGYRSKATGELLQKGCYPVDEDAPEHYEPVYEQFEGWEEDISNCESFEELPENARKYVLAIEKYVGSPIVWIGIGANRNNTIMKK</sequence>
<protein>
    <recommendedName>
        <fullName evidence="2">Adenylosuccinate synthetase</fullName>
        <shortName evidence="2">AMPSase</shortName>
        <shortName evidence="2">AdSS</shortName>
        <ecNumber evidence="2">6.3.4.4</ecNumber>
    </recommendedName>
    <alternativeName>
        <fullName evidence="2">IMP--aspartate ligase</fullName>
    </alternativeName>
</protein>